<accession>Q2RQX2</accession>
<reference key="1">
    <citation type="journal article" date="2011" name="Stand. Genomic Sci.">
        <title>Complete genome sequence of Rhodospirillum rubrum type strain (S1).</title>
        <authorList>
            <person name="Munk A.C."/>
            <person name="Copeland A."/>
            <person name="Lucas S."/>
            <person name="Lapidus A."/>
            <person name="Del Rio T.G."/>
            <person name="Barry K."/>
            <person name="Detter J.C."/>
            <person name="Hammon N."/>
            <person name="Israni S."/>
            <person name="Pitluck S."/>
            <person name="Brettin T."/>
            <person name="Bruce D."/>
            <person name="Han C."/>
            <person name="Tapia R."/>
            <person name="Gilna P."/>
            <person name="Schmutz J."/>
            <person name="Larimer F."/>
            <person name="Land M."/>
            <person name="Kyrpides N.C."/>
            <person name="Mavromatis K."/>
            <person name="Richardson P."/>
            <person name="Rohde M."/>
            <person name="Goeker M."/>
            <person name="Klenk H.P."/>
            <person name="Zhang Y."/>
            <person name="Roberts G.P."/>
            <person name="Reslewic S."/>
            <person name="Schwartz D.C."/>
        </authorList>
    </citation>
    <scope>NUCLEOTIDE SEQUENCE [LARGE SCALE GENOMIC DNA]</scope>
    <source>
        <strain>ATCC 11170 / ATH 1.1.1 / DSM 467 / LMG 4362 / NCIMB 8255 / S1</strain>
    </source>
</reference>
<sequence>MARLQEHYQTVVKKALLEKFQYGNVMEIPRLEKIVINMGVGEASQDRKLIEGALTDMTAISGQKPIITRAKKSIAAFKLREQMIVGCKVTLRRDRMFEFLDRLVTIALPRVRDFRGVSAKSFDGRGNYNMGLKEQIVFPEIDYDRVDKVRGMDITICTSAKSDEEAKALLEGFAMPFMK</sequence>
<proteinExistence type="inferred from homology"/>
<comment type="function">
    <text evidence="1">This is one of the proteins that bind and probably mediate the attachment of the 5S RNA into the large ribosomal subunit, where it forms part of the central protuberance. In the 70S ribosome it contacts protein S13 of the 30S subunit (bridge B1b), connecting the 2 subunits; this bridge is implicated in subunit movement. Contacts the P site tRNA; the 5S rRNA and some of its associated proteins might help stabilize positioning of ribosome-bound tRNAs.</text>
</comment>
<comment type="subunit">
    <text evidence="1">Part of the 50S ribosomal subunit; part of the 5S rRNA/L5/L18/L25 subcomplex. Contacts the 5S rRNA and the P site tRNA. Forms a bridge to the 30S subunit in the 70S ribosome.</text>
</comment>
<comment type="similarity">
    <text evidence="1">Belongs to the universal ribosomal protein uL5 family.</text>
</comment>
<gene>
    <name evidence="1" type="primary">rplE</name>
    <name type="ordered locus">Rru_A2676</name>
</gene>
<dbReference type="EMBL" id="CP000230">
    <property type="protein sequence ID" value="ABC23473.1"/>
    <property type="molecule type" value="Genomic_DNA"/>
</dbReference>
<dbReference type="RefSeq" id="WP_011390426.1">
    <property type="nucleotide sequence ID" value="NC_007643.1"/>
</dbReference>
<dbReference type="RefSeq" id="YP_427760.1">
    <property type="nucleotide sequence ID" value="NC_007643.1"/>
</dbReference>
<dbReference type="SMR" id="Q2RQX2"/>
<dbReference type="STRING" id="269796.Rru_A2676"/>
<dbReference type="EnsemblBacteria" id="ABC23473">
    <property type="protein sequence ID" value="ABC23473"/>
    <property type="gene ID" value="Rru_A2676"/>
</dbReference>
<dbReference type="KEGG" id="rru:Rru_A2676"/>
<dbReference type="PATRIC" id="fig|269796.9.peg.2783"/>
<dbReference type="eggNOG" id="COG0094">
    <property type="taxonomic scope" value="Bacteria"/>
</dbReference>
<dbReference type="HOGENOM" id="CLU_061015_2_1_5"/>
<dbReference type="PhylomeDB" id="Q2RQX2"/>
<dbReference type="Proteomes" id="UP000001929">
    <property type="component" value="Chromosome"/>
</dbReference>
<dbReference type="GO" id="GO:1990904">
    <property type="term" value="C:ribonucleoprotein complex"/>
    <property type="evidence" value="ECO:0007669"/>
    <property type="project" value="UniProtKB-KW"/>
</dbReference>
<dbReference type="GO" id="GO:0005840">
    <property type="term" value="C:ribosome"/>
    <property type="evidence" value="ECO:0007669"/>
    <property type="project" value="UniProtKB-KW"/>
</dbReference>
<dbReference type="GO" id="GO:0019843">
    <property type="term" value="F:rRNA binding"/>
    <property type="evidence" value="ECO:0007669"/>
    <property type="project" value="UniProtKB-UniRule"/>
</dbReference>
<dbReference type="GO" id="GO:0003735">
    <property type="term" value="F:structural constituent of ribosome"/>
    <property type="evidence" value="ECO:0007669"/>
    <property type="project" value="InterPro"/>
</dbReference>
<dbReference type="GO" id="GO:0000049">
    <property type="term" value="F:tRNA binding"/>
    <property type="evidence" value="ECO:0007669"/>
    <property type="project" value="UniProtKB-UniRule"/>
</dbReference>
<dbReference type="GO" id="GO:0006412">
    <property type="term" value="P:translation"/>
    <property type="evidence" value="ECO:0007669"/>
    <property type="project" value="UniProtKB-UniRule"/>
</dbReference>
<dbReference type="FunFam" id="3.30.1440.10:FF:000001">
    <property type="entry name" value="50S ribosomal protein L5"/>
    <property type="match status" value="1"/>
</dbReference>
<dbReference type="Gene3D" id="3.30.1440.10">
    <property type="match status" value="1"/>
</dbReference>
<dbReference type="HAMAP" id="MF_01333_B">
    <property type="entry name" value="Ribosomal_uL5_B"/>
    <property type="match status" value="1"/>
</dbReference>
<dbReference type="InterPro" id="IPR002132">
    <property type="entry name" value="Ribosomal_uL5"/>
</dbReference>
<dbReference type="InterPro" id="IPR020930">
    <property type="entry name" value="Ribosomal_uL5_bac-type"/>
</dbReference>
<dbReference type="InterPro" id="IPR031309">
    <property type="entry name" value="Ribosomal_uL5_C"/>
</dbReference>
<dbReference type="InterPro" id="IPR020929">
    <property type="entry name" value="Ribosomal_uL5_CS"/>
</dbReference>
<dbReference type="InterPro" id="IPR022803">
    <property type="entry name" value="Ribosomal_uL5_dom_sf"/>
</dbReference>
<dbReference type="InterPro" id="IPR031310">
    <property type="entry name" value="Ribosomal_uL5_N"/>
</dbReference>
<dbReference type="NCBIfam" id="NF000585">
    <property type="entry name" value="PRK00010.1"/>
    <property type="match status" value="1"/>
</dbReference>
<dbReference type="PANTHER" id="PTHR11994">
    <property type="entry name" value="60S RIBOSOMAL PROTEIN L11-RELATED"/>
    <property type="match status" value="1"/>
</dbReference>
<dbReference type="Pfam" id="PF00281">
    <property type="entry name" value="Ribosomal_L5"/>
    <property type="match status" value="1"/>
</dbReference>
<dbReference type="Pfam" id="PF00673">
    <property type="entry name" value="Ribosomal_L5_C"/>
    <property type="match status" value="1"/>
</dbReference>
<dbReference type="PIRSF" id="PIRSF002161">
    <property type="entry name" value="Ribosomal_L5"/>
    <property type="match status" value="1"/>
</dbReference>
<dbReference type="SUPFAM" id="SSF55282">
    <property type="entry name" value="RL5-like"/>
    <property type="match status" value="1"/>
</dbReference>
<dbReference type="PROSITE" id="PS00358">
    <property type="entry name" value="RIBOSOMAL_L5"/>
    <property type="match status" value="1"/>
</dbReference>
<name>RL5_RHORT</name>
<organism>
    <name type="scientific">Rhodospirillum rubrum (strain ATCC 11170 / ATH 1.1.1 / DSM 467 / LMG 4362 / NCIMB 8255 / S1)</name>
    <dbReference type="NCBI Taxonomy" id="269796"/>
    <lineage>
        <taxon>Bacteria</taxon>
        <taxon>Pseudomonadati</taxon>
        <taxon>Pseudomonadota</taxon>
        <taxon>Alphaproteobacteria</taxon>
        <taxon>Rhodospirillales</taxon>
        <taxon>Rhodospirillaceae</taxon>
        <taxon>Rhodospirillum</taxon>
    </lineage>
</organism>
<keyword id="KW-1185">Reference proteome</keyword>
<keyword id="KW-0687">Ribonucleoprotein</keyword>
<keyword id="KW-0689">Ribosomal protein</keyword>
<keyword id="KW-0694">RNA-binding</keyword>
<keyword id="KW-0699">rRNA-binding</keyword>
<keyword id="KW-0820">tRNA-binding</keyword>
<protein>
    <recommendedName>
        <fullName evidence="1">Large ribosomal subunit protein uL5</fullName>
    </recommendedName>
    <alternativeName>
        <fullName evidence="2">50S ribosomal protein L5</fullName>
    </alternativeName>
</protein>
<evidence type="ECO:0000255" key="1">
    <source>
        <dbReference type="HAMAP-Rule" id="MF_01333"/>
    </source>
</evidence>
<evidence type="ECO:0000305" key="2"/>
<feature type="chain" id="PRO_0000243054" description="Large ribosomal subunit protein uL5">
    <location>
        <begin position="1"/>
        <end position="179"/>
    </location>
</feature>